<feature type="chain" id="PRO_1000140751" description="Small ribosomal subunit protein uS4">
    <location>
        <begin position="1"/>
        <end position="210"/>
    </location>
</feature>
<feature type="domain" description="S4 RNA-binding" evidence="1">
    <location>
        <begin position="99"/>
        <end position="162"/>
    </location>
</feature>
<feature type="region of interest" description="Disordered" evidence="2">
    <location>
        <begin position="30"/>
        <end position="49"/>
    </location>
</feature>
<dbReference type="EMBL" id="CP000777">
    <property type="protein sequence ID" value="ABZ94391.1"/>
    <property type="molecule type" value="Genomic_DNA"/>
</dbReference>
<dbReference type="RefSeq" id="WP_012388921.1">
    <property type="nucleotide sequence ID" value="NC_010842.1"/>
</dbReference>
<dbReference type="SMR" id="B0SA21"/>
<dbReference type="KEGG" id="lbf:LBF_1887"/>
<dbReference type="HOGENOM" id="CLU_092403_0_2_12"/>
<dbReference type="GO" id="GO:0015935">
    <property type="term" value="C:small ribosomal subunit"/>
    <property type="evidence" value="ECO:0007669"/>
    <property type="project" value="InterPro"/>
</dbReference>
<dbReference type="GO" id="GO:0019843">
    <property type="term" value="F:rRNA binding"/>
    <property type="evidence" value="ECO:0007669"/>
    <property type="project" value="UniProtKB-UniRule"/>
</dbReference>
<dbReference type="GO" id="GO:0003735">
    <property type="term" value="F:structural constituent of ribosome"/>
    <property type="evidence" value="ECO:0007669"/>
    <property type="project" value="InterPro"/>
</dbReference>
<dbReference type="GO" id="GO:0042274">
    <property type="term" value="P:ribosomal small subunit biogenesis"/>
    <property type="evidence" value="ECO:0007669"/>
    <property type="project" value="TreeGrafter"/>
</dbReference>
<dbReference type="GO" id="GO:0006412">
    <property type="term" value="P:translation"/>
    <property type="evidence" value="ECO:0007669"/>
    <property type="project" value="UniProtKB-UniRule"/>
</dbReference>
<dbReference type="CDD" id="cd00165">
    <property type="entry name" value="S4"/>
    <property type="match status" value="1"/>
</dbReference>
<dbReference type="FunFam" id="3.10.290.10:FF:000001">
    <property type="entry name" value="30S ribosomal protein S4"/>
    <property type="match status" value="1"/>
</dbReference>
<dbReference type="Gene3D" id="1.10.1050.10">
    <property type="entry name" value="Ribosomal Protein S4 Delta 41, Chain A, domain 1"/>
    <property type="match status" value="1"/>
</dbReference>
<dbReference type="Gene3D" id="3.10.290.10">
    <property type="entry name" value="RNA-binding S4 domain"/>
    <property type="match status" value="1"/>
</dbReference>
<dbReference type="HAMAP" id="MF_01306_B">
    <property type="entry name" value="Ribosomal_uS4_B"/>
    <property type="match status" value="1"/>
</dbReference>
<dbReference type="InterPro" id="IPR022801">
    <property type="entry name" value="Ribosomal_uS4"/>
</dbReference>
<dbReference type="InterPro" id="IPR005709">
    <property type="entry name" value="Ribosomal_uS4_bac-type"/>
</dbReference>
<dbReference type="InterPro" id="IPR018079">
    <property type="entry name" value="Ribosomal_uS4_CS"/>
</dbReference>
<dbReference type="InterPro" id="IPR001912">
    <property type="entry name" value="Ribosomal_uS4_N"/>
</dbReference>
<dbReference type="InterPro" id="IPR002942">
    <property type="entry name" value="S4_RNA-bd"/>
</dbReference>
<dbReference type="InterPro" id="IPR036986">
    <property type="entry name" value="S4_RNA-bd_sf"/>
</dbReference>
<dbReference type="NCBIfam" id="NF003717">
    <property type="entry name" value="PRK05327.1"/>
    <property type="match status" value="1"/>
</dbReference>
<dbReference type="NCBIfam" id="TIGR01017">
    <property type="entry name" value="rpsD_bact"/>
    <property type="match status" value="1"/>
</dbReference>
<dbReference type="PANTHER" id="PTHR11831">
    <property type="entry name" value="30S 40S RIBOSOMAL PROTEIN"/>
    <property type="match status" value="1"/>
</dbReference>
<dbReference type="PANTHER" id="PTHR11831:SF4">
    <property type="entry name" value="SMALL RIBOSOMAL SUBUNIT PROTEIN US4M"/>
    <property type="match status" value="1"/>
</dbReference>
<dbReference type="Pfam" id="PF00163">
    <property type="entry name" value="Ribosomal_S4"/>
    <property type="match status" value="1"/>
</dbReference>
<dbReference type="Pfam" id="PF01479">
    <property type="entry name" value="S4"/>
    <property type="match status" value="1"/>
</dbReference>
<dbReference type="SMART" id="SM01390">
    <property type="entry name" value="Ribosomal_S4"/>
    <property type="match status" value="1"/>
</dbReference>
<dbReference type="SMART" id="SM00363">
    <property type="entry name" value="S4"/>
    <property type="match status" value="1"/>
</dbReference>
<dbReference type="SUPFAM" id="SSF55174">
    <property type="entry name" value="Alpha-L RNA-binding motif"/>
    <property type="match status" value="1"/>
</dbReference>
<dbReference type="PROSITE" id="PS00632">
    <property type="entry name" value="RIBOSOMAL_S4"/>
    <property type="match status" value="1"/>
</dbReference>
<dbReference type="PROSITE" id="PS50889">
    <property type="entry name" value="S4"/>
    <property type="match status" value="1"/>
</dbReference>
<organism>
    <name type="scientific">Leptospira biflexa serovar Patoc (strain Patoc 1 / Ames)</name>
    <dbReference type="NCBI Taxonomy" id="355278"/>
    <lineage>
        <taxon>Bacteria</taxon>
        <taxon>Pseudomonadati</taxon>
        <taxon>Spirochaetota</taxon>
        <taxon>Spirochaetia</taxon>
        <taxon>Leptospirales</taxon>
        <taxon>Leptospiraceae</taxon>
        <taxon>Leptospira</taxon>
    </lineage>
</organism>
<evidence type="ECO:0000255" key="1">
    <source>
        <dbReference type="HAMAP-Rule" id="MF_01306"/>
    </source>
</evidence>
<evidence type="ECO:0000256" key="2">
    <source>
        <dbReference type="SAM" id="MobiDB-lite"/>
    </source>
</evidence>
<evidence type="ECO:0000305" key="3"/>
<protein>
    <recommendedName>
        <fullName evidence="1">Small ribosomal subunit protein uS4</fullName>
    </recommendedName>
    <alternativeName>
        <fullName evidence="3">30S ribosomal protein S4</fullName>
    </alternativeName>
</protein>
<gene>
    <name evidence="1" type="primary">rpsD</name>
    <name type="ordered locus">LBF_1887</name>
</gene>
<name>RS4_LEPBA</name>
<proteinExistence type="inferred from homology"/>
<reference key="1">
    <citation type="journal article" date="2008" name="PLoS ONE">
        <title>Genome sequence of the saprophyte Leptospira biflexa provides insights into the evolution of Leptospira and the pathogenesis of leptospirosis.</title>
        <authorList>
            <person name="Picardeau M."/>
            <person name="Bulach D.M."/>
            <person name="Bouchier C."/>
            <person name="Zuerner R.L."/>
            <person name="Zidane N."/>
            <person name="Wilson P.J."/>
            <person name="Creno S."/>
            <person name="Kuczek E.S."/>
            <person name="Bommezzadri S."/>
            <person name="Davis J.C."/>
            <person name="McGrath A."/>
            <person name="Johnson M.J."/>
            <person name="Boursaux-Eude C."/>
            <person name="Seemann T."/>
            <person name="Rouy Z."/>
            <person name="Coppel R.L."/>
            <person name="Rood J.I."/>
            <person name="Lajus A."/>
            <person name="Davies J.K."/>
            <person name="Medigue C."/>
            <person name="Adler B."/>
        </authorList>
    </citation>
    <scope>NUCLEOTIDE SEQUENCE [LARGE SCALE GENOMIC DNA]</scope>
    <source>
        <strain>Patoc 1 / Ames</strain>
    </source>
</reference>
<accession>B0SA21</accession>
<sequence>MARYRGPVVKLMRREGLNLFLKNSHTLHKEKSSLEKRKYPPGLPPKKKGKITEYGAQLREKQKVKRAYGVLEKQFRRYFEEASHTPGIPGENLLQFLERRLDNVLYRMGFAVTRRQARNFVAHRHILVNGHRVDICSYRVNIGDKIEIREKFQKSAFIEENIKLAQAINRTASWVSVDYAKFSGEVLSLPTRDHIDIPVKEQVIVELYSK</sequence>
<comment type="function">
    <text evidence="1">One of the primary rRNA binding proteins, it binds directly to 16S rRNA where it nucleates assembly of the body of the 30S subunit.</text>
</comment>
<comment type="function">
    <text evidence="1">With S5 and S12 plays an important role in translational accuracy.</text>
</comment>
<comment type="subunit">
    <text evidence="1">Part of the 30S ribosomal subunit. Contacts protein S5. The interaction surface between S4 and S5 is involved in control of translational fidelity.</text>
</comment>
<comment type="similarity">
    <text evidence="1">Belongs to the universal ribosomal protein uS4 family.</text>
</comment>
<keyword id="KW-0687">Ribonucleoprotein</keyword>
<keyword id="KW-0689">Ribosomal protein</keyword>
<keyword id="KW-0694">RNA-binding</keyword>
<keyword id="KW-0699">rRNA-binding</keyword>